<name>EIF3A_DEBHA</name>
<reference key="1">
    <citation type="journal article" date="2004" name="Nature">
        <title>Genome evolution in yeasts.</title>
        <authorList>
            <person name="Dujon B."/>
            <person name="Sherman D."/>
            <person name="Fischer G."/>
            <person name="Durrens P."/>
            <person name="Casaregola S."/>
            <person name="Lafontaine I."/>
            <person name="de Montigny J."/>
            <person name="Marck C."/>
            <person name="Neuveglise C."/>
            <person name="Talla E."/>
            <person name="Goffard N."/>
            <person name="Frangeul L."/>
            <person name="Aigle M."/>
            <person name="Anthouard V."/>
            <person name="Babour A."/>
            <person name="Barbe V."/>
            <person name="Barnay S."/>
            <person name="Blanchin S."/>
            <person name="Beckerich J.-M."/>
            <person name="Beyne E."/>
            <person name="Bleykasten C."/>
            <person name="Boisrame A."/>
            <person name="Boyer J."/>
            <person name="Cattolico L."/>
            <person name="Confanioleri F."/>
            <person name="de Daruvar A."/>
            <person name="Despons L."/>
            <person name="Fabre E."/>
            <person name="Fairhead C."/>
            <person name="Ferry-Dumazet H."/>
            <person name="Groppi A."/>
            <person name="Hantraye F."/>
            <person name="Hennequin C."/>
            <person name="Jauniaux N."/>
            <person name="Joyet P."/>
            <person name="Kachouri R."/>
            <person name="Kerrest A."/>
            <person name="Koszul R."/>
            <person name="Lemaire M."/>
            <person name="Lesur I."/>
            <person name="Ma L."/>
            <person name="Muller H."/>
            <person name="Nicaud J.-M."/>
            <person name="Nikolski M."/>
            <person name="Oztas S."/>
            <person name="Ozier-Kalogeropoulos O."/>
            <person name="Pellenz S."/>
            <person name="Potier S."/>
            <person name="Richard G.-F."/>
            <person name="Straub M.-L."/>
            <person name="Suleau A."/>
            <person name="Swennen D."/>
            <person name="Tekaia F."/>
            <person name="Wesolowski-Louvel M."/>
            <person name="Westhof E."/>
            <person name="Wirth B."/>
            <person name="Zeniou-Meyer M."/>
            <person name="Zivanovic Y."/>
            <person name="Bolotin-Fukuhara M."/>
            <person name="Thierry A."/>
            <person name="Bouchier C."/>
            <person name="Caudron B."/>
            <person name="Scarpelli C."/>
            <person name="Gaillardin C."/>
            <person name="Weissenbach J."/>
            <person name="Wincker P."/>
            <person name="Souciet J.-L."/>
        </authorList>
    </citation>
    <scope>NUCLEOTIDE SEQUENCE [LARGE SCALE GENOMIC DNA]</scope>
    <source>
        <strain>ATCC 36239 / CBS 767 / BCRC 21394 / JCM 1990 / NBRC 0083 / IGC 2968</strain>
    </source>
</reference>
<comment type="function">
    <text evidence="1">RNA-binding component of the eukaryotic translation initiation factor 3 (eIF-3) complex, which is involved in protein synthesis of a specialized repertoire of mRNAs and, together with other initiation factors, stimulates binding of mRNA and methionyl-tRNAi to the 40S ribosome. The eIF-3 complex specifically targets and initiates translation of a subset of mRNAs involved in cell proliferation.</text>
</comment>
<comment type="subunit">
    <text evidence="1">Component of the eukaryotic translation initiation factor 3 (eIF-3) complex.</text>
</comment>
<comment type="subcellular location">
    <subcellularLocation>
        <location evidence="1">Cytoplasm</location>
    </subcellularLocation>
</comment>
<comment type="similarity">
    <text evidence="1">Belongs to the eIF-3 subunit A family.</text>
</comment>
<feature type="chain" id="PRO_0000366361" description="Eukaryotic translation initiation factor 3 subunit A">
    <location>
        <begin position="1"/>
        <end position="900"/>
    </location>
</feature>
<feature type="domain" description="PCI" evidence="2">
    <location>
        <begin position="326"/>
        <end position="508"/>
    </location>
</feature>
<feature type="region of interest" description="Disordered" evidence="3">
    <location>
        <begin position="808"/>
        <end position="883"/>
    </location>
</feature>
<feature type="coiled-coil region" evidence="1">
    <location>
        <begin position="96"/>
        <end position="129"/>
    </location>
</feature>
<feature type="coiled-coil region" evidence="1">
    <location>
        <begin position="551"/>
        <end position="859"/>
    </location>
</feature>
<feature type="compositionally biased region" description="Basic and acidic residues" evidence="3">
    <location>
        <begin position="808"/>
        <end position="853"/>
    </location>
</feature>
<feature type="compositionally biased region" description="Low complexity" evidence="3">
    <location>
        <begin position="871"/>
        <end position="883"/>
    </location>
</feature>
<dbReference type="EMBL" id="CR382139">
    <property type="protein sequence ID" value="CAR65939.1"/>
    <property type="molecule type" value="Genomic_DNA"/>
</dbReference>
<dbReference type="RefSeq" id="XP_002770604.1">
    <property type="nucleotide sequence ID" value="XM_002770558.1"/>
</dbReference>
<dbReference type="SMR" id="B5RUP5"/>
<dbReference type="FunCoup" id="B5RUP5">
    <property type="interactions" value="1361"/>
</dbReference>
<dbReference type="STRING" id="284592.B5RUP5"/>
<dbReference type="GeneID" id="8999161"/>
<dbReference type="KEGG" id="dha:DEHA2G10098g"/>
<dbReference type="VEuPathDB" id="FungiDB:DEHA2G10098g"/>
<dbReference type="eggNOG" id="KOG2072">
    <property type="taxonomic scope" value="Eukaryota"/>
</dbReference>
<dbReference type="HOGENOM" id="CLU_002096_2_1_1"/>
<dbReference type="InParanoid" id="B5RUP5"/>
<dbReference type="OMA" id="EHITNKR"/>
<dbReference type="OrthoDB" id="18884at2759"/>
<dbReference type="Proteomes" id="UP000000599">
    <property type="component" value="Chromosome G"/>
</dbReference>
<dbReference type="GO" id="GO:0010494">
    <property type="term" value="C:cytoplasmic stress granule"/>
    <property type="evidence" value="ECO:0007669"/>
    <property type="project" value="EnsemblFungi"/>
</dbReference>
<dbReference type="GO" id="GO:0016282">
    <property type="term" value="C:eukaryotic 43S preinitiation complex"/>
    <property type="evidence" value="ECO:0007669"/>
    <property type="project" value="UniProtKB-UniRule"/>
</dbReference>
<dbReference type="GO" id="GO:0033290">
    <property type="term" value="C:eukaryotic 48S preinitiation complex"/>
    <property type="evidence" value="ECO:0007669"/>
    <property type="project" value="UniProtKB-UniRule"/>
</dbReference>
<dbReference type="GO" id="GO:0071540">
    <property type="term" value="C:eukaryotic translation initiation factor 3 complex, eIF3e"/>
    <property type="evidence" value="ECO:0007669"/>
    <property type="project" value="EnsemblFungi"/>
</dbReference>
<dbReference type="GO" id="GO:0071541">
    <property type="term" value="C:eukaryotic translation initiation factor 3 complex, eIF3m"/>
    <property type="evidence" value="ECO:0007669"/>
    <property type="project" value="EnsemblFungi"/>
</dbReference>
<dbReference type="GO" id="GO:0043614">
    <property type="term" value="C:multi-eIF complex"/>
    <property type="evidence" value="ECO:0007669"/>
    <property type="project" value="TreeGrafter"/>
</dbReference>
<dbReference type="GO" id="GO:0003729">
    <property type="term" value="F:mRNA binding"/>
    <property type="evidence" value="ECO:0007669"/>
    <property type="project" value="TreeGrafter"/>
</dbReference>
<dbReference type="GO" id="GO:0003743">
    <property type="term" value="F:translation initiation factor activity"/>
    <property type="evidence" value="ECO:0007669"/>
    <property type="project" value="UniProtKB-UniRule"/>
</dbReference>
<dbReference type="GO" id="GO:0001732">
    <property type="term" value="P:formation of cytoplasmic translation initiation complex"/>
    <property type="evidence" value="ECO:0007669"/>
    <property type="project" value="UniProtKB-UniRule"/>
</dbReference>
<dbReference type="GO" id="GO:0002188">
    <property type="term" value="P:translation reinitiation"/>
    <property type="evidence" value="ECO:0007669"/>
    <property type="project" value="TreeGrafter"/>
</dbReference>
<dbReference type="FunFam" id="4.10.860.10:FF:000001">
    <property type="entry name" value="Eukaryotic translation initiation factor 3 subunit A"/>
    <property type="match status" value="1"/>
</dbReference>
<dbReference type="Gene3D" id="1.25.40.860">
    <property type="match status" value="2"/>
</dbReference>
<dbReference type="Gene3D" id="4.10.860.10">
    <property type="entry name" value="UVR domain"/>
    <property type="match status" value="1"/>
</dbReference>
<dbReference type="HAMAP" id="MF_03000">
    <property type="entry name" value="eIF3a"/>
    <property type="match status" value="1"/>
</dbReference>
<dbReference type="InterPro" id="IPR027512">
    <property type="entry name" value="EIF3A"/>
</dbReference>
<dbReference type="InterPro" id="IPR054711">
    <property type="entry name" value="eIF3a_PCI_TPR-like"/>
</dbReference>
<dbReference type="InterPro" id="IPR000717">
    <property type="entry name" value="PCI_dom"/>
</dbReference>
<dbReference type="PANTHER" id="PTHR14005:SF0">
    <property type="entry name" value="EUKARYOTIC TRANSLATION INITIATION FACTOR 3 SUBUNIT A"/>
    <property type="match status" value="1"/>
</dbReference>
<dbReference type="PANTHER" id="PTHR14005">
    <property type="entry name" value="EUKARYOTIC TRANSLATION INITIATION FACTOR 3, THETA SUBUNIT"/>
    <property type="match status" value="1"/>
</dbReference>
<dbReference type="Pfam" id="PF22591">
    <property type="entry name" value="eIF3a_PCI_TPR-like"/>
    <property type="match status" value="1"/>
</dbReference>
<dbReference type="Pfam" id="PF01399">
    <property type="entry name" value="PCI"/>
    <property type="match status" value="1"/>
</dbReference>
<dbReference type="SMART" id="SM00088">
    <property type="entry name" value="PINT"/>
    <property type="match status" value="1"/>
</dbReference>
<dbReference type="PROSITE" id="PS50250">
    <property type="entry name" value="PCI"/>
    <property type="match status" value="1"/>
</dbReference>
<gene>
    <name evidence="1" type="primary">TIF32</name>
    <name type="ordered locus">DEHA2G10098g</name>
</gene>
<proteinExistence type="inferred from homology"/>
<evidence type="ECO:0000255" key="1">
    <source>
        <dbReference type="HAMAP-Rule" id="MF_03000"/>
    </source>
</evidence>
<evidence type="ECO:0000255" key="2">
    <source>
        <dbReference type="PROSITE-ProRule" id="PRU01185"/>
    </source>
</evidence>
<evidence type="ECO:0000256" key="3">
    <source>
        <dbReference type="SAM" id="MobiDB-lite"/>
    </source>
</evidence>
<protein>
    <recommendedName>
        <fullName evidence="1">Eukaryotic translation initiation factor 3 subunit A</fullName>
        <shortName evidence="1">eIF3a</shortName>
    </recommendedName>
    <alternativeName>
        <fullName evidence="1">Eukaryotic translation initiation factor 3 110 kDa subunit homolog</fullName>
        <shortName evidence="1">eIF3 p110</shortName>
    </alternativeName>
    <alternativeName>
        <fullName evidence="1">Translation initiation factor eIF3, p110 subunit homolog</fullName>
    </alternativeName>
</protein>
<keyword id="KW-0175">Coiled coil</keyword>
<keyword id="KW-0963">Cytoplasm</keyword>
<keyword id="KW-0396">Initiation factor</keyword>
<keyword id="KW-0648">Protein biosynthesis</keyword>
<keyword id="KW-1185">Reference proteome</keyword>
<keyword id="KW-0694">RNA-binding</keyword>
<accession>B5RUP5</accession>
<sequence length="900" mass="103683">MAPPHRHHNFRPENVYKRAEDLIAVGQRNAALETLYELITSKRIRYLAVQDLEPIALLLIELAVDLRKGKLAKDALHQYKKNVQLSENGLESVQVIVRKFIELAEKKLEEAQAKADVKIDQGEVEDLEAAQTPESILLSAVSNADSADRTERELVNPWLRFLWEALRAVLDILRNNSKLEVTYSAIVNQAFQFCLKFNRKAEFRRLCELLRGHMQSVTTQIKPTGSMNAIDLSDSETVQRYLDQRFAQLNISVKLELWQESFRSVDDVHTLITASKKAPRPVMMANYYENLGRIFAVSGNSLYHAAAWNKFFNLYCQSPNATDDELSHYASILVLATLSVPQKSLNSNETVVDDHKAKNAKLTSLLNLNQVPTRDTLLKSIVSRSILSFVDPAVKQLFTVLEEDEFHPLTIKKKVSEVFQLIESNKDYKQYIPTLTEAILIRLYQQVSQVYETVKLDFLVSLGIIEGTEFSLSALEVENLIVNGVKDGHLSLTIDHETDVVTLKSKPFEDAFTDSLTSKLQISPSELVRSQLSKLAQTLSSSAKVIDPEYEVRIQKTRNEALKNAIADMAREQQEIADRVNVMEERKRIADKAKREQDEEAARLRQEANVAEQKAEQERILAEQERRNLEKLERERQLVKEKEKLKIAEEINAKGIIKLDLNNLDDLDTEKLRIMQIEQLNKDKKDLEERLKVLSKKNDHTERAFRRYELQYLEKDAEKQQEDDIKNYETLKELKISKAKKDHEESLALKDRLQRIVPDFEPFKKIIDEKHSSKLAELRKEAQAALEQAKRERTERVKHQRMDELMERREYERKEAEQEEIKRKRQEEMDKFKEELRIQKEKDADSLRRRQEMANESAKPATPEPVPAPVPAAAAAAAKPSAPLTFAEKMRLKRLGKPGN</sequence>
<organism>
    <name type="scientific">Debaryomyces hansenii (strain ATCC 36239 / CBS 767 / BCRC 21394 / JCM 1990 / NBRC 0083 / IGC 2968)</name>
    <name type="common">Yeast</name>
    <name type="synonym">Torulaspora hansenii</name>
    <dbReference type="NCBI Taxonomy" id="284592"/>
    <lineage>
        <taxon>Eukaryota</taxon>
        <taxon>Fungi</taxon>
        <taxon>Dikarya</taxon>
        <taxon>Ascomycota</taxon>
        <taxon>Saccharomycotina</taxon>
        <taxon>Pichiomycetes</taxon>
        <taxon>Debaryomycetaceae</taxon>
        <taxon>Debaryomyces</taxon>
    </lineage>
</organism>